<name>E13K_TOBAC</name>
<evidence type="ECO:0000250" key="1">
    <source>
        <dbReference type="UniProtKB" id="O22317"/>
    </source>
</evidence>
<evidence type="ECO:0000250" key="2">
    <source>
        <dbReference type="UniProtKB" id="P15797"/>
    </source>
</evidence>
<evidence type="ECO:0000255" key="3"/>
<evidence type="ECO:0000305" key="4"/>
<dbReference type="EC" id="3.2.1.39"/>
<dbReference type="EMBL" id="M60464">
    <property type="protein sequence ID" value="AAA34053.1"/>
    <property type="molecule type" value="mRNA"/>
</dbReference>
<dbReference type="PIR" id="T02343">
    <property type="entry name" value="T02343"/>
</dbReference>
<dbReference type="RefSeq" id="NP_001313079.1">
    <property type="nucleotide sequence ID" value="NM_001326150.1"/>
</dbReference>
<dbReference type="SMR" id="P52398"/>
<dbReference type="STRING" id="4097.P52398"/>
<dbReference type="CAZy" id="GH17">
    <property type="family name" value="Glycoside Hydrolase Family 17"/>
</dbReference>
<dbReference type="PaxDb" id="4097-P52398"/>
<dbReference type="GeneID" id="107825406"/>
<dbReference type="KEGG" id="nta:107825406"/>
<dbReference type="OrthoDB" id="941679at2759"/>
<dbReference type="Proteomes" id="UP000084051">
    <property type="component" value="Unplaced"/>
</dbReference>
<dbReference type="GO" id="GO:0005576">
    <property type="term" value="C:extracellular region"/>
    <property type="evidence" value="ECO:0007669"/>
    <property type="project" value="UniProtKB-SubCell"/>
</dbReference>
<dbReference type="GO" id="GO:0042973">
    <property type="term" value="F:glucan endo-1,3-beta-D-glucosidase activity"/>
    <property type="evidence" value="ECO:0007669"/>
    <property type="project" value="UniProtKB-EC"/>
</dbReference>
<dbReference type="GO" id="GO:0005975">
    <property type="term" value="P:carbohydrate metabolic process"/>
    <property type="evidence" value="ECO:0007669"/>
    <property type="project" value="InterPro"/>
</dbReference>
<dbReference type="GO" id="GO:0006952">
    <property type="term" value="P:defense response"/>
    <property type="evidence" value="ECO:0007669"/>
    <property type="project" value="UniProtKB-KW"/>
</dbReference>
<dbReference type="FunFam" id="3.20.20.80:FF:000010">
    <property type="entry name" value="glucan endo-1,3-beta-glucosidase, basic"/>
    <property type="match status" value="1"/>
</dbReference>
<dbReference type="Gene3D" id="3.20.20.80">
    <property type="entry name" value="Glycosidases"/>
    <property type="match status" value="1"/>
</dbReference>
<dbReference type="InterPro" id="IPR000490">
    <property type="entry name" value="Glyco_hydro_17"/>
</dbReference>
<dbReference type="InterPro" id="IPR044965">
    <property type="entry name" value="Glyco_hydro_17_plant"/>
</dbReference>
<dbReference type="InterPro" id="IPR017853">
    <property type="entry name" value="Glycoside_hydrolase_SF"/>
</dbReference>
<dbReference type="PANTHER" id="PTHR32227">
    <property type="entry name" value="GLUCAN ENDO-1,3-BETA-GLUCOSIDASE BG1-RELATED-RELATED"/>
    <property type="match status" value="1"/>
</dbReference>
<dbReference type="Pfam" id="PF00332">
    <property type="entry name" value="Glyco_hydro_17"/>
    <property type="match status" value="1"/>
</dbReference>
<dbReference type="SUPFAM" id="SSF51445">
    <property type="entry name" value="(Trans)glycosidases"/>
    <property type="match status" value="1"/>
</dbReference>
<dbReference type="PROSITE" id="PS00587">
    <property type="entry name" value="GLYCOSYL_HYDROL_F17"/>
    <property type="match status" value="1"/>
</dbReference>
<proteinExistence type="evidence at transcript level"/>
<organism>
    <name type="scientific">Nicotiana tabacum</name>
    <name type="common">Common tobacco</name>
    <dbReference type="NCBI Taxonomy" id="4097"/>
    <lineage>
        <taxon>Eukaryota</taxon>
        <taxon>Viridiplantae</taxon>
        <taxon>Streptophyta</taxon>
        <taxon>Embryophyta</taxon>
        <taxon>Tracheophyta</taxon>
        <taxon>Spermatophyta</taxon>
        <taxon>Magnoliopsida</taxon>
        <taxon>eudicotyledons</taxon>
        <taxon>Gunneridae</taxon>
        <taxon>Pentapetalae</taxon>
        <taxon>asterids</taxon>
        <taxon>lamiids</taxon>
        <taxon>Solanales</taxon>
        <taxon>Solanaceae</taxon>
        <taxon>Nicotianoideae</taxon>
        <taxon>Nicotianeae</taxon>
        <taxon>Nicotiana</taxon>
    </lineage>
</organism>
<reference key="1">
    <citation type="journal article" date="1991" name="Plant Physiol.">
        <title>Differential regulation of beta-1,3-glucanase messenger RNAs in response to pathogen infection.</title>
        <authorList>
            <person name="Ward E.R."/>
            <person name="Payne G.B."/>
            <person name="Moyer M.B."/>
            <person name="Williams S.C."/>
            <person name="Dincher S.S."/>
            <person name="Sharkey K.C."/>
            <person name="Beck J.J."/>
            <person name="Taylor H.T."/>
            <person name="Ahl-Goy P."/>
            <person name="Meins F."/>
            <person name="Ryals J.A."/>
        </authorList>
    </citation>
    <scope>NUCLEOTIDE SEQUENCE [MRNA]</scope>
    <source>
        <strain>cv. Xanthi NC</strain>
        <tissue>Leaf</tissue>
    </source>
</reference>
<sequence length="331" mass="36891">MCSIQIIGAQSIGVCYGKAANNLPSDQDVINLYNANGIRKLRIYYPDKNIFKALNGSNIEIILGVPNQDLEALANSSIANGWVQDNIRSHFPYVKFKYISIGNKVSPTNNDQYSEFLLQAMKNVYNALAAAGLQDMIKVSTVTYSGVLANTYPPERSIFREEFKSFINPIIQFLARNNLPLLANVYPYFVHVSNTADVSLSYALFTQQGTNSAGYQNLFDAILDSMYFAVEKAGGPNVEIIVSESGWPSEGSSAATIENAQTYYRNLINHVKSGAGTPKKPGKTIETYLFAMFDENDKIGEITEKHFGLFSPDQRAKYQLNFNYLPIYILR</sequence>
<comment type="function">
    <text>Is thought to be an important plant defense-related product against fungal pathogens.</text>
</comment>
<comment type="catalytic activity">
    <reaction>
        <text>Hydrolysis of (1-&gt;3)-beta-D-glucosidic linkages in (1-&gt;3)-beta-D-glucans.</text>
        <dbReference type="EC" id="3.2.1.39"/>
    </reaction>
</comment>
<comment type="subcellular location">
    <subcellularLocation>
        <location>Secreted</location>
        <location>Extracellular space</location>
    </subcellularLocation>
</comment>
<comment type="tissue specificity">
    <text>Is expressed primarily in epidermal cell of healthy plant, and following induction by ethylene, accumulates in mesophyll cells.</text>
</comment>
<comment type="induction">
    <text>By viral infection.</text>
</comment>
<comment type="similarity">
    <text evidence="4">Belongs to the glycosyl hydrolase 17 family.</text>
</comment>
<feature type="signal peptide" evidence="3">
    <location>
        <begin position="1"/>
        <end position="9"/>
    </location>
</feature>
<feature type="chain" id="PRO_0000011879" description="Glucan endo-1,3-beta-glucosidase, acidic isoform GL161">
    <location>
        <begin position="10"/>
        <end position="331"/>
    </location>
</feature>
<feature type="active site" description="Nucleophile" evidence="1">
    <location>
        <position position="244"/>
    </location>
</feature>
<feature type="modified residue" description="Pyrrolidone carboxylic acid" evidence="2">
    <location>
        <position position="10"/>
    </location>
</feature>
<feature type="glycosylation site" description="N-linked (GlcNAc...) asparagine" evidence="3">
    <location>
        <position position="55"/>
    </location>
</feature>
<feature type="glycosylation site" description="N-linked (GlcNAc...) asparagine" evidence="3">
    <location>
        <position position="75"/>
    </location>
</feature>
<protein>
    <recommendedName>
        <fullName>Glucan endo-1,3-beta-glucosidase, acidic isoform GL161</fullName>
        <ecNumber>3.2.1.39</ecNumber>
    </recommendedName>
    <alternativeName>
        <fullName>(1-&gt;3)-beta-glucan endohydrolase</fullName>
        <shortName>(1-&gt;3)-beta-glucanase</shortName>
    </alternativeName>
    <alternativeName>
        <fullName>Beta-1,3-endoglucanase</fullName>
    </alternativeName>
</protein>
<keyword id="KW-0325">Glycoprotein</keyword>
<keyword id="KW-0326">Glycosidase</keyword>
<keyword id="KW-0378">Hydrolase</keyword>
<keyword id="KW-0611">Plant defense</keyword>
<keyword id="KW-0873">Pyrrolidone carboxylic acid</keyword>
<keyword id="KW-1185">Reference proteome</keyword>
<keyword id="KW-0964">Secreted</keyword>
<keyword id="KW-0732">Signal</keyword>
<accession>P52398</accession>